<feature type="chain" id="PRO_0000415302" description="HTH-type transcriptional repressor NanR">
    <location>
        <begin position="1"/>
        <end position="260"/>
    </location>
</feature>
<feature type="domain" description="HTH gntR-type" evidence="1">
    <location>
        <begin position="27"/>
        <end position="95"/>
    </location>
</feature>
<feature type="DNA-binding region" description="H-T-H motif" evidence="1">
    <location>
        <begin position="55"/>
        <end position="74"/>
    </location>
</feature>
<feature type="region of interest" description="Disordered" evidence="2">
    <location>
        <begin position="1"/>
        <end position="22"/>
    </location>
</feature>
<comment type="function">
    <text evidence="1">Transcriptional repressor that controls expression of the genes required for the catabolism of sialic acids.</text>
</comment>
<comment type="similarity">
    <text evidence="1">Belongs to the NanR family.</text>
</comment>
<protein>
    <recommendedName>
        <fullName evidence="1">HTH-type transcriptional repressor NanR</fullName>
    </recommendedName>
</protein>
<reference key="1">
    <citation type="journal article" date="2011" name="J. Bacteriol.">
        <title>Comparative genomics of 28 Salmonella enterica isolates: evidence for CRISPR-mediated adaptive sublineage evolution.</title>
        <authorList>
            <person name="Fricke W.F."/>
            <person name="Mammel M.K."/>
            <person name="McDermott P.F."/>
            <person name="Tartera C."/>
            <person name="White D.G."/>
            <person name="Leclerc J.E."/>
            <person name="Ravel J."/>
            <person name="Cebula T.A."/>
        </authorList>
    </citation>
    <scope>NUCLEOTIDE SEQUENCE [LARGE SCALE GENOMIC DNA]</scope>
    <source>
        <strain>SL254</strain>
    </source>
</reference>
<organism>
    <name type="scientific">Salmonella newport (strain SL254)</name>
    <dbReference type="NCBI Taxonomy" id="423368"/>
    <lineage>
        <taxon>Bacteria</taxon>
        <taxon>Pseudomonadati</taxon>
        <taxon>Pseudomonadota</taxon>
        <taxon>Gammaproteobacteria</taxon>
        <taxon>Enterobacterales</taxon>
        <taxon>Enterobacteriaceae</taxon>
        <taxon>Salmonella</taxon>
    </lineage>
</organism>
<proteinExistence type="inferred from homology"/>
<evidence type="ECO:0000255" key="1">
    <source>
        <dbReference type="HAMAP-Rule" id="MF_01236"/>
    </source>
</evidence>
<evidence type="ECO:0000256" key="2">
    <source>
        <dbReference type="SAM" id="MobiDB-lite"/>
    </source>
</evidence>
<name>NANR_SALNS</name>
<sequence length="260" mass="29427">MNAFDSQAEDSPTSLGRSLRRRPLARKKLSEMVEEELEQMIRRHEFGEGEQLPSERELMAFFNVGRPSVREALAALKRKGLVQINNGERARVSRPSADTIISELSGMAKDFLTHPGGIAHFEQLRLFFESSLVRYAAEHATDEQIALLAKALEINSQSLDDNALFIRSDVEFHRVLAEIPGNPIFMAIHVALLDWLIAARPSVPDRELHEHNNVSYQQHIVIVDAIRQRDPDKADRALQTHLNSVSATWHALGKKSQKMR</sequence>
<gene>
    <name evidence="1" type="primary">nanR</name>
    <name type="ordered locus">SNSL254_A3603</name>
</gene>
<keyword id="KW-0238">DNA-binding</keyword>
<keyword id="KW-0678">Repressor</keyword>
<keyword id="KW-0804">Transcription</keyword>
<keyword id="KW-0805">Transcription regulation</keyword>
<dbReference type="EMBL" id="CP001113">
    <property type="protein sequence ID" value="ACF62709.1"/>
    <property type="molecule type" value="Genomic_DNA"/>
</dbReference>
<dbReference type="SMR" id="B4T751"/>
<dbReference type="KEGG" id="see:SNSL254_A3603"/>
<dbReference type="HOGENOM" id="CLU_017584_9_1_6"/>
<dbReference type="Proteomes" id="UP000008824">
    <property type="component" value="Chromosome"/>
</dbReference>
<dbReference type="GO" id="GO:0003677">
    <property type="term" value="F:DNA binding"/>
    <property type="evidence" value="ECO:0007669"/>
    <property type="project" value="UniProtKB-KW"/>
</dbReference>
<dbReference type="GO" id="GO:0003700">
    <property type="term" value="F:DNA-binding transcription factor activity"/>
    <property type="evidence" value="ECO:0007669"/>
    <property type="project" value="UniProtKB-UniRule"/>
</dbReference>
<dbReference type="GO" id="GO:0045892">
    <property type="term" value="P:negative regulation of DNA-templated transcription"/>
    <property type="evidence" value="ECO:0007669"/>
    <property type="project" value="UniProtKB-UniRule"/>
</dbReference>
<dbReference type="CDD" id="cd07377">
    <property type="entry name" value="WHTH_GntR"/>
    <property type="match status" value="1"/>
</dbReference>
<dbReference type="FunFam" id="1.10.10.10:FF:000150">
    <property type="entry name" value="HTH-type transcriptional repressor NanR"/>
    <property type="match status" value="1"/>
</dbReference>
<dbReference type="Gene3D" id="1.20.120.530">
    <property type="entry name" value="GntR ligand-binding domain-like"/>
    <property type="match status" value="1"/>
</dbReference>
<dbReference type="Gene3D" id="1.10.10.10">
    <property type="entry name" value="Winged helix-like DNA-binding domain superfamily/Winged helix DNA-binding domain"/>
    <property type="match status" value="1"/>
</dbReference>
<dbReference type="HAMAP" id="MF_01236">
    <property type="entry name" value="HTH_NanR"/>
    <property type="match status" value="1"/>
</dbReference>
<dbReference type="InterPro" id="IPR011711">
    <property type="entry name" value="GntR_C"/>
</dbReference>
<dbReference type="InterPro" id="IPR008920">
    <property type="entry name" value="TF_FadR/GntR_C"/>
</dbReference>
<dbReference type="InterPro" id="IPR000524">
    <property type="entry name" value="Tscrpt_reg_HTH_GntR"/>
</dbReference>
<dbReference type="InterPro" id="IPR023730">
    <property type="entry name" value="Tscrpt_reg_NanR"/>
</dbReference>
<dbReference type="InterPro" id="IPR036388">
    <property type="entry name" value="WH-like_DNA-bd_sf"/>
</dbReference>
<dbReference type="InterPro" id="IPR036390">
    <property type="entry name" value="WH_DNA-bd_sf"/>
</dbReference>
<dbReference type="NCBIfam" id="NF003011">
    <property type="entry name" value="PRK03837.1"/>
    <property type="match status" value="1"/>
</dbReference>
<dbReference type="PANTHER" id="PTHR43537:SF53">
    <property type="entry name" value="HTH-TYPE TRANSCRIPTIONAL REPRESSOR NANR"/>
    <property type="match status" value="1"/>
</dbReference>
<dbReference type="PANTHER" id="PTHR43537">
    <property type="entry name" value="TRANSCRIPTIONAL REGULATOR, GNTR FAMILY"/>
    <property type="match status" value="1"/>
</dbReference>
<dbReference type="Pfam" id="PF07729">
    <property type="entry name" value="FCD"/>
    <property type="match status" value="1"/>
</dbReference>
<dbReference type="Pfam" id="PF00392">
    <property type="entry name" value="GntR"/>
    <property type="match status" value="1"/>
</dbReference>
<dbReference type="PRINTS" id="PR00035">
    <property type="entry name" value="HTHGNTR"/>
</dbReference>
<dbReference type="SMART" id="SM00895">
    <property type="entry name" value="FCD"/>
    <property type="match status" value="1"/>
</dbReference>
<dbReference type="SMART" id="SM00345">
    <property type="entry name" value="HTH_GNTR"/>
    <property type="match status" value="1"/>
</dbReference>
<dbReference type="SUPFAM" id="SSF48008">
    <property type="entry name" value="GntR ligand-binding domain-like"/>
    <property type="match status" value="1"/>
</dbReference>
<dbReference type="SUPFAM" id="SSF46785">
    <property type="entry name" value="Winged helix' DNA-binding domain"/>
    <property type="match status" value="1"/>
</dbReference>
<dbReference type="PROSITE" id="PS50949">
    <property type="entry name" value="HTH_GNTR"/>
    <property type="match status" value="1"/>
</dbReference>
<accession>B4T751</accession>